<keyword id="KW-0067">ATP-binding</keyword>
<keyword id="KW-0315">Glutamine amidotransferase</keyword>
<keyword id="KW-0332">GMP biosynthesis</keyword>
<keyword id="KW-0436">Ligase</keyword>
<keyword id="KW-0547">Nucleotide-binding</keyword>
<keyword id="KW-0658">Purine biosynthesis</keyword>
<gene>
    <name evidence="1" type="primary">guaA</name>
    <name type="ordered locus">Dgeo_0598</name>
</gene>
<accession>Q1J0T4</accession>
<protein>
    <recommendedName>
        <fullName evidence="1">GMP synthase [glutamine-hydrolyzing]</fullName>
        <ecNumber evidence="1">6.3.5.2</ecNumber>
    </recommendedName>
    <alternativeName>
        <fullName evidence="1">GMP synthetase</fullName>
    </alternativeName>
    <alternativeName>
        <fullName evidence="1">Glutamine amidotransferase</fullName>
    </alternativeName>
</protein>
<sequence length="505" mass="55148">MSVVILDFGSQFTRLIARRLRELGAYSVILPGTASLERIAQENPQGIVLSGGPSSVYDANAPRPAPGVLDLDVPILGVCYGMQFLAHEAGGAVQRAGKREYGKADLTRYGGQLFAGIQGEFVAWMSHSDSVTQLPQGYEVIAATEDTPVAGIENTVTRRYGVQFHPEVVHTPKGGQLLANFLEICGVARDWNAEHIVDELIEDVRRQVGAGRVLLAISGGVDSSTLGLLLARAIGDRLTAVFIDHGLLRLGEREQVEAALRPLGVNLVTVDASEEFLGALAGVSDPEQKRKIIGREFIRAFEREARKYGPFDFLAQGTLYPDVIESAGGEGAANIKSHHNVGGLPEDLAFKLVEPFRTLFKDEVREIARLLGLPDAIRMRHPFPGPGLAIRCLGEVTREKLDILKRVDDIFISGLREFGLYDGCSQALAVLTPIQSVGVMGDERTYSYTAALRAVTTDDFMTAEWARLPYEFLATMSNRIVNQVHEINRVVYDITGKPPATIEWE</sequence>
<proteinExistence type="inferred from homology"/>
<reference key="1">
    <citation type="submission" date="2006-04" db="EMBL/GenBank/DDBJ databases">
        <title>Complete sequence of chromosome of Deinococcus geothermalis DSM 11300.</title>
        <authorList>
            <person name="Copeland A."/>
            <person name="Lucas S."/>
            <person name="Lapidus A."/>
            <person name="Barry K."/>
            <person name="Detter J.C."/>
            <person name="Glavina del Rio T."/>
            <person name="Hammon N."/>
            <person name="Israni S."/>
            <person name="Dalin E."/>
            <person name="Tice H."/>
            <person name="Pitluck S."/>
            <person name="Brettin T."/>
            <person name="Bruce D."/>
            <person name="Han C."/>
            <person name="Tapia R."/>
            <person name="Saunders E."/>
            <person name="Gilna P."/>
            <person name="Schmutz J."/>
            <person name="Larimer F."/>
            <person name="Land M."/>
            <person name="Hauser L."/>
            <person name="Kyrpides N."/>
            <person name="Kim E."/>
            <person name="Daly M.J."/>
            <person name="Fredrickson J.K."/>
            <person name="Makarova K.S."/>
            <person name="Gaidamakova E.K."/>
            <person name="Zhai M."/>
            <person name="Richardson P."/>
        </authorList>
    </citation>
    <scope>NUCLEOTIDE SEQUENCE [LARGE SCALE GENOMIC DNA]</scope>
    <source>
        <strain>DSM 11300 / CIP 105573 / AG-3a</strain>
    </source>
</reference>
<dbReference type="EC" id="6.3.5.2" evidence="1"/>
<dbReference type="EMBL" id="CP000359">
    <property type="protein sequence ID" value="ABF44900.1"/>
    <property type="molecule type" value="Genomic_DNA"/>
</dbReference>
<dbReference type="RefSeq" id="WP_011529742.1">
    <property type="nucleotide sequence ID" value="NC_008025.1"/>
</dbReference>
<dbReference type="SMR" id="Q1J0T4"/>
<dbReference type="STRING" id="319795.Dgeo_0598"/>
<dbReference type="MEROPS" id="C26.957"/>
<dbReference type="KEGG" id="dge:Dgeo_0598"/>
<dbReference type="eggNOG" id="COG0518">
    <property type="taxonomic scope" value="Bacteria"/>
</dbReference>
<dbReference type="eggNOG" id="COG0519">
    <property type="taxonomic scope" value="Bacteria"/>
</dbReference>
<dbReference type="HOGENOM" id="CLU_014340_0_5_0"/>
<dbReference type="UniPathway" id="UPA00189">
    <property type="reaction ID" value="UER00296"/>
</dbReference>
<dbReference type="Proteomes" id="UP000002431">
    <property type="component" value="Chromosome"/>
</dbReference>
<dbReference type="GO" id="GO:0005829">
    <property type="term" value="C:cytosol"/>
    <property type="evidence" value="ECO:0007669"/>
    <property type="project" value="TreeGrafter"/>
</dbReference>
<dbReference type="GO" id="GO:0005524">
    <property type="term" value="F:ATP binding"/>
    <property type="evidence" value="ECO:0007669"/>
    <property type="project" value="UniProtKB-UniRule"/>
</dbReference>
<dbReference type="GO" id="GO:0003921">
    <property type="term" value="F:GMP synthase activity"/>
    <property type="evidence" value="ECO:0007669"/>
    <property type="project" value="InterPro"/>
</dbReference>
<dbReference type="CDD" id="cd01742">
    <property type="entry name" value="GATase1_GMP_Synthase"/>
    <property type="match status" value="1"/>
</dbReference>
<dbReference type="CDD" id="cd01997">
    <property type="entry name" value="GMP_synthase_C"/>
    <property type="match status" value="1"/>
</dbReference>
<dbReference type="FunFam" id="3.30.300.10:FF:000002">
    <property type="entry name" value="GMP synthase [glutamine-hydrolyzing]"/>
    <property type="match status" value="1"/>
</dbReference>
<dbReference type="FunFam" id="3.40.50.620:FF:000001">
    <property type="entry name" value="GMP synthase [glutamine-hydrolyzing]"/>
    <property type="match status" value="1"/>
</dbReference>
<dbReference type="FunFam" id="3.40.50.880:FF:000001">
    <property type="entry name" value="GMP synthase [glutamine-hydrolyzing]"/>
    <property type="match status" value="1"/>
</dbReference>
<dbReference type="Gene3D" id="3.30.300.10">
    <property type="match status" value="1"/>
</dbReference>
<dbReference type="Gene3D" id="3.40.50.880">
    <property type="match status" value="1"/>
</dbReference>
<dbReference type="Gene3D" id="3.40.50.620">
    <property type="entry name" value="HUPs"/>
    <property type="match status" value="1"/>
</dbReference>
<dbReference type="HAMAP" id="MF_00344">
    <property type="entry name" value="GMP_synthase"/>
    <property type="match status" value="1"/>
</dbReference>
<dbReference type="InterPro" id="IPR029062">
    <property type="entry name" value="Class_I_gatase-like"/>
</dbReference>
<dbReference type="InterPro" id="IPR017926">
    <property type="entry name" value="GATASE"/>
</dbReference>
<dbReference type="InterPro" id="IPR001674">
    <property type="entry name" value="GMP_synth_C"/>
</dbReference>
<dbReference type="InterPro" id="IPR004739">
    <property type="entry name" value="GMP_synth_GATase"/>
</dbReference>
<dbReference type="InterPro" id="IPR022955">
    <property type="entry name" value="GMP_synthase"/>
</dbReference>
<dbReference type="InterPro" id="IPR025777">
    <property type="entry name" value="GMPS_ATP_PPase_dom"/>
</dbReference>
<dbReference type="InterPro" id="IPR022310">
    <property type="entry name" value="NAD/GMP_synthase"/>
</dbReference>
<dbReference type="InterPro" id="IPR014729">
    <property type="entry name" value="Rossmann-like_a/b/a_fold"/>
</dbReference>
<dbReference type="NCBIfam" id="TIGR00884">
    <property type="entry name" value="guaA_Cterm"/>
    <property type="match status" value="1"/>
</dbReference>
<dbReference type="NCBIfam" id="TIGR00888">
    <property type="entry name" value="guaA_Nterm"/>
    <property type="match status" value="1"/>
</dbReference>
<dbReference type="NCBIfam" id="NF000848">
    <property type="entry name" value="PRK00074.1"/>
    <property type="match status" value="1"/>
</dbReference>
<dbReference type="PANTHER" id="PTHR11922:SF2">
    <property type="entry name" value="GMP SYNTHASE [GLUTAMINE-HYDROLYZING]"/>
    <property type="match status" value="1"/>
</dbReference>
<dbReference type="PANTHER" id="PTHR11922">
    <property type="entry name" value="GMP SYNTHASE-RELATED"/>
    <property type="match status" value="1"/>
</dbReference>
<dbReference type="Pfam" id="PF00117">
    <property type="entry name" value="GATase"/>
    <property type="match status" value="1"/>
</dbReference>
<dbReference type="Pfam" id="PF00958">
    <property type="entry name" value="GMP_synt_C"/>
    <property type="match status" value="1"/>
</dbReference>
<dbReference type="Pfam" id="PF02540">
    <property type="entry name" value="NAD_synthase"/>
    <property type="match status" value="1"/>
</dbReference>
<dbReference type="PRINTS" id="PR00097">
    <property type="entry name" value="ANTSNTHASEII"/>
</dbReference>
<dbReference type="PRINTS" id="PR00099">
    <property type="entry name" value="CPSGATASE"/>
</dbReference>
<dbReference type="PRINTS" id="PR00096">
    <property type="entry name" value="GATASE"/>
</dbReference>
<dbReference type="SUPFAM" id="SSF52402">
    <property type="entry name" value="Adenine nucleotide alpha hydrolases-like"/>
    <property type="match status" value="1"/>
</dbReference>
<dbReference type="SUPFAM" id="SSF52317">
    <property type="entry name" value="Class I glutamine amidotransferase-like"/>
    <property type="match status" value="1"/>
</dbReference>
<dbReference type="SUPFAM" id="SSF54810">
    <property type="entry name" value="GMP synthetase C-terminal dimerisation domain"/>
    <property type="match status" value="1"/>
</dbReference>
<dbReference type="PROSITE" id="PS51273">
    <property type="entry name" value="GATASE_TYPE_1"/>
    <property type="match status" value="1"/>
</dbReference>
<dbReference type="PROSITE" id="PS51553">
    <property type="entry name" value="GMPS_ATP_PPASE"/>
    <property type="match status" value="1"/>
</dbReference>
<comment type="function">
    <text evidence="1">Catalyzes the synthesis of GMP from XMP.</text>
</comment>
<comment type="catalytic activity">
    <reaction evidence="1">
        <text>XMP + L-glutamine + ATP + H2O = GMP + L-glutamate + AMP + diphosphate + 2 H(+)</text>
        <dbReference type="Rhea" id="RHEA:11680"/>
        <dbReference type="ChEBI" id="CHEBI:15377"/>
        <dbReference type="ChEBI" id="CHEBI:15378"/>
        <dbReference type="ChEBI" id="CHEBI:29985"/>
        <dbReference type="ChEBI" id="CHEBI:30616"/>
        <dbReference type="ChEBI" id="CHEBI:33019"/>
        <dbReference type="ChEBI" id="CHEBI:57464"/>
        <dbReference type="ChEBI" id="CHEBI:58115"/>
        <dbReference type="ChEBI" id="CHEBI:58359"/>
        <dbReference type="ChEBI" id="CHEBI:456215"/>
        <dbReference type="EC" id="6.3.5.2"/>
    </reaction>
</comment>
<comment type="pathway">
    <text evidence="1">Purine metabolism; GMP biosynthesis; GMP from XMP (L-Gln route): step 1/1.</text>
</comment>
<comment type="subunit">
    <text evidence="1">Homodimer.</text>
</comment>
<organism>
    <name type="scientific">Deinococcus geothermalis (strain DSM 11300 / CIP 105573 / AG-3a)</name>
    <dbReference type="NCBI Taxonomy" id="319795"/>
    <lineage>
        <taxon>Bacteria</taxon>
        <taxon>Thermotogati</taxon>
        <taxon>Deinococcota</taxon>
        <taxon>Deinococci</taxon>
        <taxon>Deinococcales</taxon>
        <taxon>Deinococcaceae</taxon>
        <taxon>Deinococcus</taxon>
    </lineage>
</organism>
<name>GUAA_DEIGD</name>
<evidence type="ECO:0000255" key="1">
    <source>
        <dbReference type="HAMAP-Rule" id="MF_00344"/>
    </source>
</evidence>
<feature type="chain" id="PRO_1000120274" description="GMP synthase [glutamine-hydrolyzing]">
    <location>
        <begin position="1"/>
        <end position="505"/>
    </location>
</feature>
<feature type="domain" description="Glutamine amidotransferase type-1" evidence="1">
    <location>
        <begin position="2"/>
        <end position="190"/>
    </location>
</feature>
<feature type="domain" description="GMPS ATP-PPase" evidence="1">
    <location>
        <begin position="191"/>
        <end position="380"/>
    </location>
</feature>
<feature type="active site" description="Nucleophile" evidence="1">
    <location>
        <position position="79"/>
    </location>
</feature>
<feature type="active site" evidence="1">
    <location>
        <position position="165"/>
    </location>
</feature>
<feature type="active site" evidence="1">
    <location>
        <position position="167"/>
    </location>
</feature>
<feature type="binding site" evidence="1">
    <location>
        <begin position="218"/>
        <end position="224"/>
    </location>
    <ligand>
        <name>ATP</name>
        <dbReference type="ChEBI" id="CHEBI:30616"/>
    </ligand>
</feature>